<reference key="1">
    <citation type="journal article" date="2005" name="Science">
        <title>The transcriptional landscape of the mammalian genome.</title>
        <authorList>
            <person name="Carninci P."/>
            <person name="Kasukawa T."/>
            <person name="Katayama S."/>
            <person name="Gough J."/>
            <person name="Frith M.C."/>
            <person name="Maeda N."/>
            <person name="Oyama R."/>
            <person name="Ravasi T."/>
            <person name="Lenhard B."/>
            <person name="Wells C."/>
            <person name="Kodzius R."/>
            <person name="Shimokawa K."/>
            <person name="Bajic V.B."/>
            <person name="Brenner S.E."/>
            <person name="Batalov S."/>
            <person name="Forrest A.R."/>
            <person name="Zavolan M."/>
            <person name="Davis M.J."/>
            <person name="Wilming L.G."/>
            <person name="Aidinis V."/>
            <person name="Allen J.E."/>
            <person name="Ambesi-Impiombato A."/>
            <person name="Apweiler R."/>
            <person name="Aturaliya R.N."/>
            <person name="Bailey T.L."/>
            <person name="Bansal M."/>
            <person name="Baxter L."/>
            <person name="Beisel K.W."/>
            <person name="Bersano T."/>
            <person name="Bono H."/>
            <person name="Chalk A.M."/>
            <person name="Chiu K.P."/>
            <person name="Choudhary V."/>
            <person name="Christoffels A."/>
            <person name="Clutterbuck D.R."/>
            <person name="Crowe M.L."/>
            <person name="Dalla E."/>
            <person name="Dalrymple B.P."/>
            <person name="de Bono B."/>
            <person name="Della Gatta G."/>
            <person name="di Bernardo D."/>
            <person name="Down T."/>
            <person name="Engstrom P."/>
            <person name="Fagiolini M."/>
            <person name="Faulkner G."/>
            <person name="Fletcher C.F."/>
            <person name="Fukushima T."/>
            <person name="Furuno M."/>
            <person name="Futaki S."/>
            <person name="Gariboldi M."/>
            <person name="Georgii-Hemming P."/>
            <person name="Gingeras T.R."/>
            <person name="Gojobori T."/>
            <person name="Green R.E."/>
            <person name="Gustincich S."/>
            <person name="Harbers M."/>
            <person name="Hayashi Y."/>
            <person name="Hensch T.K."/>
            <person name="Hirokawa N."/>
            <person name="Hill D."/>
            <person name="Huminiecki L."/>
            <person name="Iacono M."/>
            <person name="Ikeo K."/>
            <person name="Iwama A."/>
            <person name="Ishikawa T."/>
            <person name="Jakt M."/>
            <person name="Kanapin A."/>
            <person name="Katoh M."/>
            <person name="Kawasawa Y."/>
            <person name="Kelso J."/>
            <person name="Kitamura H."/>
            <person name="Kitano H."/>
            <person name="Kollias G."/>
            <person name="Krishnan S.P."/>
            <person name="Kruger A."/>
            <person name="Kummerfeld S.K."/>
            <person name="Kurochkin I.V."/>
            <person name="Lareau L.F."/>
            <person name="Lazarevic D."/>
            <person name="Lipovich L."/>
            <person name="Liu J."/>
            <person name="Liuni S."/>
            <person name="McWilliam S."/>
            <person name="Madan Babu M."/>
            <person name="Madera M."/>
            <person name="Marchionni L."/>
            <person name="Matsuda H."/>
            <person name="Matsuzawa S."/>
            <person name="Miki H."/>
            <person name="Mignone F."/>
            <person name="Miyake S."/>
            <person name="Morris K."/>
            <person name="Mottagui-Tabar S."/>
            <person name="Mulder N."/>
            <person name="Nakano N."/>
            <person name="Nakauchi H."/>
            <person name="Ng P."/>
            <person name="Nilsson R."/>
            <person name="Nishiguchi S."/>
            <person name="Nishikawa S."/>
            <person name="Nori F."/>
            <person name="Ohara O."/>
            <person name="Okazaki Y."/>
            <person name="Orlando V."/>
            <person name="Pang K.C."/>
            <person name="Pavan W.J."/>
            <person name="Pavesi G."/>
            <person name="Pesole G."/>
            <person name="Petrovsky N."/>
            <person name="Piazza S."/>
            <person name="Reed J."/>
            <person name="Reid J.F."/>
            <person name="Ring B.Z."/>
            <person name="Ringwald M."/>
            <person name="Rost B."/>
            <person name="Ruan Y."/>
            <person name="Salzberg S.L."/>
            <person name="Sandelin A."/>
            <person name="Schneider C."/>
            <person name="Schoenbach C."/>
            <person name="Sekiguchi K."/>
            <person name="Semple C.A."/>
            <person name="Seno S."/>
            <person name="Sessa L."/>
            <person name="Sheng Y."/>
            <person name="Shibata Y."/>
            <person name="Shimada H."/>
            <person name="Shimada K."/>
            <person name="Silva D."/>
            <person name="Sinclair B."/>
            <person name="Sperling S."/>
            <person name="Stupka E."/>
            <person name="Sugiura K."/>
            <person name="Sultana R."/>
            <person name="Takenaka Y."/>
            <person name="Taki K."/>
            <person name="Tammoja K."/>
            <person name="Tan S.L."/>
            <person name="Tang S."/>
            <person name="Taylor M.S."/>
            <person name="Tegner J."/>
            <person name="Teichmann S.A."/>
            <person name="Ueda H.R."/>
            <person name="van Nimwegen E."/>
            <person name="Verardo R."/>
            <person name="Wei C.L."/>
            <person name="Yagi K."/>
            <person name="Yamanishi H."/>
            <person name="Zabarovsky E."/>
            <person name="Zhu S."/>
            <person name="Zimmer A."/>
            <person name="Hide W."/>
            <person name="Bult C."/>
            <person name="Grimmond S.M."/>
            <person name="Teasdale R.D."/>
            <person name="Liu E.T."/>
            <person name="Brusic V."/>
            <person name="Quackenbush J."/>
            <person name="Wahlestedt C."/>
            <person name="Mattick J.S."/>
            <person name="Hume D.A."/>
            <person name="Kai C."/>
            <person name="Sasaki D."/>
            <person name="Tomaru Y."/>
            <person name="Fukuda S."/>
            <person name="Kanamori-Katayama M."/>
            <person name="Suzuki M."/>
            <person name="Aoki J."/>
            <person name="Arakawa T."/>
            <person name="Iida J."/>
            <person name="Imamura K."/>
            <person name="Itoh M."/>
            <person name="Kato T."/>
            <person name="Kawaji H."/>
            <person name="Kawagashira N."/>
            <person name="Kawashima T."/>
            <person name="Kojima M."/>
            <person name="Kondo S."/>
            <person name="Konno H."/>
            <person name="Nakano K."/>
            <person name="Ninomiya N."/>
            <person name="Nishio T."/>
            <person name="Okada M."/>
            <person name="Plessy C."/>
            <person name="Shibata K."/>
            <person name="Shiraki T."/>
            <person name="Suzuki S."/>
            <person name="Tagami M."/>
            <person name="Waki K."/>
            <person name="Watahiki A."/>
            <person name="Okamura-Oho Y."/>
            <person name="Suzuki H."/>
            <person name="Kawai J."/>
            <person name="Hayashizaki Y."/>
        </authorList>
    </citation>
    <scope>NUCLEOTIDE SEQUENCE [LARGE SCALE MRNA] (ISOFORMS 1 AND 2)</scope>
    <source>
        <strain>C3H/HeJ</strain>
        <strain>C57BL/6J</strain>
        <tissue>Brain</tissue>
    </source>
</reference>
<reference key="2">
    <citation type="journal article" date="2009" name="PLoS Biol.">
        <title>Lineage-specific biology revealed by a finished genome assembly of the mouse.</title>
        <authorList>
            <person name="Church D.M."/>
            <person name="Goodstadt L."/>
            <person name="Hillier L.W."/>
            <person name="Zody M.C."/>
            <person name="Goldstein S."/>
            <person name="She X."/>
            <person name="Bult C.J."/>
            <person name="Agarwala R."/>
            <person name="Cherry J.L."/>
            <person name="DiCuccio M."/>
            <person name="Hlavina W."/>
            <person name="Kapustin Y."/>
            <person name="Meric P."/>
            <person name="Maglott D."/>
            <person name="Birtle Z."/>
            <person name="Marques A.C."/>
            <person name="Graves T."/>
            <person name="Zhou S."/>
            <person name="Teague B."/>
            <person name="Potamousis K."/>
            <person name="Churas C."/>
            <person name="Place M."/>
            <person name="Herschleb J."/>
            <person name="Runnheim R."/>
            <person name="Forrest D."/>
            <person name="Amos-Landgraf J."/>
            <person name="Schwartz D.C."/>
            <person name="Cheng Z."/>
            <person name="Lindblad-Toh K."/>
            <person name="Eichler E.E."/>
            <person name="Ponting C.P."/>
        </authorList>
    </citation>
    <scope>NUCLEOTIDE SEQUENCE [LARGE SCALE GENOMIC DNA]</scope>
    <source>
        <strain>C57BL/6J</strain>
    </source>
</reference>
<reference key="3">
    <citation type="journal article" date="2004" name="Genome Res.">
        <title>The status, quality, and expansion of the NIH full-length cDNA project: the Mammalian Gene Collection (MGC).</title>
        <authorList>
            <consortium name="The MGC Project Team"/>
        </authorList>
    </citation>
    <scope>NUCLEOTIDE SEQUENCE [LARGE SCALE MRNA] (ISOFORM 2)</scope>
    <source>
        <strain>FVB/N</strain>
        <tissue>Kidney</tissue>
    </source>
</reference>
<reference key="4">
    <citation type="journal article" date="2010" name="Cell">
        <title>A tissue-specific atlas of mouse protein phosphorylation and expression.</title>
        <authorList>
            <person name="Huttlin E.L."/>
            <person name="Jedrychowski M.P."/>
            <person name="Elias J.E."/>
            <person name="Goswami T."/>
            <person name="Rad R."/>
            <person name="Beausoleil S.A."/>
            <person name="Villen J."/>
            <person name="Haas W."/>
            <person name="Sowa M.E."/>
            <person name="Gygi S.P."/>
        </authorList>
    </citation>
    <scope>IDENTIFICATION BY MASS SPECTROMETRY [LARGE SCALE ANALYSIS]</scope>
    <source>
        <tissue>Heart</tissue>
    </source>
</reference>
<reference key="5">
    <citation type="journal article" date="2014" name="Hum. Mol. Genet.">
        <title>The arginine methyltransferase NDUFAF7 is essential for complex I assembly and early vertebrate embryogenesis.</title>
        <authorList>
            <person name="Zurita Rendon O."/>
            <person name="Silva Neiva L."/>
            <person name="Sasarman F."/>
            <person name="Shoubridge E.A."/>
        </authorList>
    </citation>
    <scope>DISRUPTION PHENOTYPE</scope>
</reference>
<organism>
    <name type="scientific">Mus musculus</name>
    <name type="common">Mouse</name>
    <dbReference type="NCBI Taxonomy" id="10090"/>
    <lineage>
        <taxon>Eukaryota</taxon>
        <taxon>Metazoa</taxon>
        <taxon>Chordata</taxon>
        <taxon>Craniata</taxon>
        <taxon>Vertebrata</taxon>
        <taxon>Euteleostomi</taxon>
        <taxon>Mammalia</taxon>
        <taxon>Eutheria</taxon>
        <taxon>Euarchontoglires</taxon>
        <taxon>Glires</taxon>
        <taxon>Rodentia</taxon>
        <taxon>Myomorpha</taxon>
        <taxon>Muroidea</taxon>
        <taxon>Muridae</taxon>
        <taxon>Murinae</taxon>
        <taxon>Mus</taxon>
        <taxon>Mus</taxon>
    </lineage>
</organism>
<comment type="function">
    <text evidence="1">Arginine methyltransferase involved in the assembly or stability of mitochondrial NADH:ubiquinone oxidoreductase complex (complex I). Acts by mediating symmetric dimethylation of 'Arg-118' of NDUFS2 after it assembles into the complex I, stabilizing the early intermediate complex.</text>
</comment>
<comment type="catalytic activity">
    <reaction evidence="1">
        <text>L-arginyl-[protein] + 2 S-adenosyl-L-methionine = N(omega),N(omega)'-dimethyl-L-arginyl-[protein] + 2 S-adenosyl-L-homocysteine + 2 H(+)</text>
        <dbReference type="Rhea" id="RHEA:48108"/>
        <dbReference type="Rhea" id="RHEA-COMP:10532"/>
        <dbReference type="Rhea" id="RHEA-COMP:11992"/>
        <dbReference type="ChEBI" id="CHEBI:15378"/>
        <dbReference type="ChEBI" id="CHEBI:29965"/>
        <dbReference type="ChEBI" id="CHEBI:57856"/>
        <dbReference type="ChEBI" id="CHEBI:59789"/>
        <dbReference type="ChEBI" id="CHEBI:88221"/>
        <dbReference type="EC" id="2.1.1.320"/>
    </reaction>
</comment>
<comment type="subunit">
    <text evidence="1">Interacts with NDUFS2.</text>
</comment>
<comment type="subcellular location">
    <subcellularLocation>
        <location evidence="1">Mitochondrion</location>
    </subcellularLocation>
</comment>
<comment type="alternative products">
    <event type="alternative splicing"/>
    <isoform>
        <id>Q9CWG8-1</id>
        <name>1</name>
        <sequence type="displayed"/>
    </isoform>
    <isoform>
        <id>Q9CWG8-2</id>
        <name>2</name>
        <sequence type="described" ref="VSP_030608"/>
    </isoform>
</comment>
<comment type="disruption phenotype">
    <text evidence="4">Embryonic lethality.</text>
</comment>
<comment type="similarity">
    <text evidence="7">Belongs to the NDUFAF7 family.</text>
</comment>
<protein>
    <recommendedName>
        <fullName evidence="1">Protein arginine methyltransferase NDUFAF7, mitochondrial</fullName>
        <ecNumber evidence="1">2.1.1.320</ecNumber>
    </recommendedName>
    <alternativeName>
        <fullName evidence="8">NADH dehydrogenase [ubiquinone] complex I, assembly factor 7</fullName>
    </alternativeName>
    <alternativeName>
        <fullName evidence="1">Protein midA homolog</fullName>
    </alternativeName>
</protein>
<evidence type="ECO:0000250" key="1">
    <source>
        <dbReference type="UniProtKB" id="Q7L592"/>
    </source>
</evidence>
<evidence type="ECO:0000255" key="2"/>
<evidence type="ECO:0000256" key="3">
    <source>
        <dbReference type="SAM" id="MobiDB-lite"/>
    </source>
</evidence>
<evidence type="ECO:0000269" key="4">
    <source>
    </source>
</evidence>
<evidence type="ECO:0000303" key="5">
    <source>
    </source>
</evidence>
<evidence type="ECO:0000303" key="6">
    <source>
    </source>
</evidence>
<evidence type="ECO:0000305" key="7"/>
<evidence type="ECO:0000312" key="8">
    <source>
        <dbReference type="MGI" id="MGI:1920944"/>
    </source>
</evidence>
<sequence length="436" mass="48385">MNALVRRCVARAGLPCIWRGKCYSSGNEPAESNQVTPMLRHLMYKIKSTGPITVAEYMKEVLTNPAKGYYVHQDMLGEKGDFITSPEISQIFGELLGVWFVSEWIASGKSPAFQLVELGPGRGTLTADILRVFSQLGSVLKTCAISIHLVEVSQKLSEIQALTLAEEKVPLERDAESLVYMKGVTKSGIPVSWYRDLKDVPEGYSLYLAHEFFDVLPVHKFQKTPRGWREVFVDVDPQASDKLRFVLAPCATPAEAFIQRDERREHVEVCPDAGVIIQELSQRIASTGGAALIADYGHDGTKTDTLRGFYGHQLHDVLIAPGTADLTADVDFSYLRRMAQGKVASLGPVEQRTFLKNMGIDVRLKVLLDKAGEPSAKQQLLGGYDMLMNPQKMGERFHFFALLPHQRLHGGSQERNACQSKTPSSSVAGFDELVWQ</sequence>
<gene>
    <name evidence="8" type="primary">Ndufaf7</name>
</gene>
<proteinExistence type="evidence at protein level"/>
<feature type="transit peptide" description="Mitochondrion" evidence="2">
    <location>
        <begin position="1"/>
        <end position="41"/>
    </location>
</feature>
<feature type="chain" id="PRO_0000315673" description="Protein arginine methyltransferase NDUFAF7, mitochondrial">
    <location>
        <begin position="42"/>
        <end position="436"/>
    </location>
</feature>
<feature type="region of interest" description="Disordered" evidence="3">
    <location>
        <begin position="411"/>
        <end position="436"/>
    </location>
</feature>
<feature type="compositionally biased region" description="Polar residues" evidence="3">
    <location>
        <begin position="413"/>
        <end position="427"/>
    </location>
</feature>
<feature type="splice variant" id="VSP_030608" description="In isoform 2." evidence="5 6">
    <original>LLDKAGEPSAKQQLLGGYDMLMNPQKMGERFHFFALLPHQRLHGGSQERNACQSKTPSSSVAGFDELVWQ</original>
    <variation>VVYLSNTKPLNFGNYLN</variation>
    <location>
        <begin position="367"/>
        <end position="436"/>
    </location>
</feature>
<feature type="sequence conflict" description="In Ref. 1; BAB27158." evidence="7" ref="1">
    <original>N</original>
    <variation>T</variation>
    <location>
        <position position="2"/>
    </location>
</feature>
<feature type="sequence conflict" description="In Ref. 1; BAB27158." evidence="7" ref="1">
    <original>E</original>
    <variation>D</variation>
    <location>
        <position position="87"/>
    </location>
</feature>
<feature type="sequence conflict" description="In Ref. 1; BAC41089 and 3; AAI08351." evidence="7" ref="1 3">
    <original>V</original>
    <variation>I</variation>
    <location>
        <position position="191"/>
    </location>
</feature>
<feature type="sequence conflict" description="In Ref. 1; BAC41089 and 3; AAI08351." evidence="7" ref="1 3">
    <original>R</original>
    <variation>H</variation>
    <location>
        <position position="336"/>
    </location>
</feature>
<accession>Q9CWG8</accession>
<accession>E9QLM6</accession>
<accession>Q8C1X3</accession>
<dbReference type="EC" id="2.1.1.320" evidence="1"/>
<dbReference type="EMBL" id="AK010752">
    <property type="protein sequence ID" value="BAB27158.2"/>
    <property type="molecule type" value="mRNA"/>
</dbReference>
<dbReference type="EMBL" id="AK090097">
    <property type="protein sequence ID" value="BAC41089.1"/>
    <property type="molecule type" value="mRNA"/>
</dbReference>
<dbReference type="EMBL" id="AC154274">
    <property type="status" value="NOT_ANNOTATED_CDS"/>
    <property type="molecule type" value="Genomic_DNA"/>
</dbReference>
<dbReference type="EMBL" id="BC108350">
    <property type="protein sequence ID" value="AAI08351.1"/>
    <property type="molecule type" value="mRNA"/>
</dbReference>
<dbReference type="CCDS" id="CCDS28982.1">
    <molecule id="Q9CWG8-1"/>
</dbReference>
<dbReference type="RefSeq" id="NP_082887.2">
    <molecule id="Q9CWG8-1"/>
    <property type="nucleotide sequence ID" value="NM_028611.3"/>
</dbReference>
<dbReference type="SMR" id="Q9CWG8"/>
<dbReference type="FunCoup" id="Q9CWG8">
    <property type="interactions" value="2591"/>
</dbReference>
<dbReference type="IntAct" id="Q9CWG8">
    <property type="interactions" value="1"/>
</dbReference>
<dbReference type="STRING" id="10090.ENSMUSP00000024887"/>
<dbReference type="GlyGen" id="Q9CWG8">
    <property type="glycosylation" value="2 sites, 1 O-linked glycan (1 site)"/>
</dbReference>
<dbReference type="PhosphoSitePlus" id="Q9CWG8"/>
<dbReference type="SwissPalm" id="Q9CWG8"/>
<dbReference type="PaxDb" id="10090-ENSMUSP00000024887"/>
<dbReference type="PeptideAtlas" id="Q9CWG8"/>
<dbReference type="ProteomicsDB" id="293645">
    <molecule id="Q9CWG8-1"/>
</dbReference>
<dbReference type="ProteomicsDB" id="293646">
    <molecule id="Q9CWG8-2"/>
</dbReference>
<dbReference type="Pumba" id="Q9CWG8"/>
<dbReference type="Antibodypedia" id="52425">
    <property type="antibodies" value="123 antibodies from 15 providers"/>
</dbReference>
<dbReference type="DNASU" id="73694"/>
<dbReference type="Ensembl" id="ENSMUST00000024887.6">
    <molecule id="Q9CWG8-1"/>
    <property type="protein sequence ID" value="ENSMUSP00000024887.5"/>
    <property type="gene ID" value="ENSMUSG00000024082.6"/>
</dbReference>
<dbReference type="Ensembl" id="ENSMUST00000233068.2">
    <molecule id="Q9CWG8-2"/>
    <property type="protein sequence ID" value="ENSMUSP00000156412.2"/>
    <property type="gene ID" value="ENSMUSG00000024082.6"/>
</dbReference>
<dbReference type="GeneID" id="73694"/>
<dbReference type="KEGG" id="mmu:73694"/>
<dbReference type="UCSC" id="uc008dpm.2">
    <molecule id="Q9CWG8-2"/>
    <property type="organism name" value="mouse"/>
</dbReference>
<dbReference type="UCSC" id="uc008dpn.2">
    <molecule id="Q9CWG8-1"/>
    <property type="organism name" value="mouse"/>
</dbReference>
<dbReference type="AGR" id="MGI:1920944"/>
<dbReference type="CTD" id="55471"/>
<dbReference type="MGI" id="MGI:1920944">
    <property type="gene designation" value="Ndufaf7"/>
</dbReference>
<dbReference type="VEuPathDB" id="HostDB:ENSMUSG00000024082"/>
<dbReference type="eggNOG" id="KOG2901">
    <property type="taxonomic scope" value="Eukaryota"/>
</dbReference>
<dbReference type="GeneTree" id="ENSGT00390000001588"/>
<dbReference type="HOGENOM" id="CLU_024840_3_1_1"/>
<dbReference type="InParanoid" id="Q9CWG8"/>
<dbReference type="OMA" id="YYHPQRN"/>
<dbReference type="OrthoDB" id="438553at2759"/>
<dbReference type="PhylomeDB" id="Q9CWG8"/>
<dbReference type="TreeFam" id="TF314312"/>
<dbReference type="Reactome" id="R-MMU-6799198">
    <property type="pathway name" value="Complex I biogenesis"/>
</dbReference>
<dbReference type="BioGRID-ORCS" id="73694">
    <property type="hits" value="18 hits in 77 CRISPR screens"/>
</dbReference>
<dbReference type="ChiTaRS" id="Ndufaf7">
    <property type="organism name" value="mouse"/>
</dbReference>
<dbReference type="PRO" id="PR:Q9CWG8"/>
<dbReference type="Proteomes" id="UP000000589">
    <property type="component" value="Chromosome 17"/>
</dbReference>
<dbReference type="RNAct" id="Q9CWG8">
    <property type="molecule type" value="protein"/>
</dbReference>
<dbReference type="Bgee" id="ENSMUSG00000024082">
    <property type="expression patterns" value="Expressed in right kidney and 257 other cell types or tissues"/>
</dbReference>
<dbReference type="ExpressionAtlas" id="Q9CWG8">
    <property type="expression patterns" value="baseline and differential"/>
</dbReference>
<dbReference type="GO" id="GO:0005739">
    <property type="term" value="C:mitochondrion"/>
    <property type="evidence" value="ECO:0007005"/>
    <property type="project" value="MGI"/>
</dbReference>
<dbReference type="GO" id="GO:0019899">
    <property type="term" value="F:enzyme binding"/>
    <property type="evidence" value="ECO:0007669"/>
    <property type="project" value="Ensembl"/>
</dbReference>
<dbReference type="GO" id="GO:0035243">
    <property type="term" value="F:protein-arginine omega-N symmetric methyltransferase activity"/>
    <property type="evidence" value="ECO:0000250"/>
    <property type="project" value="UniProtKB"/>
</dbReference>
<dbReference type="GO" id="GO:0032981">
    <property type="term" value="P:mitochondrial respiratory chain complex I assembly"/>
    <property type="evidence" value="ECO:0000250"/>
    <property type="project" value="UniProtKB"/>
</dbReference>
<dbReference type="GO" id="GO:0019918">
    <property type="term" value="P:peptidyl-arginine methylation, to symmetrical-dimethyl arginine"/>
    <property type="evidence" value="ECO:0000250"/>
    <property type="project" value="UniProtKB"/>
</dbReference>
<dbReference type="FunFam" id="3.40.50.12710:FF:000001">
    <property type="entry name" value="Protein arginine methyltransferase NDUFAF7"/>
    <property type="match status" value="1"/>
</dbReference>
<dbReference type="Gene3D" id="3.40.50.12710">
    <property type="match status" value="1"/>
</dbReference>
<dbReference type="InterPro" id="IPR003788">
    <property type="entry name" value="NDUFAF7"/>
</dbReference>
<dbReference type="InterPro" id="IPR038375">
    <property type="entry name" value="NDUFAF7_sf"/>
</dbReference>
<dbReference type="InterPro" id="IPR029063">
    <property type="entry name" value="SAM-dependent_MTases_sf"/>
</dbReference>
<dbReference type="PANTHER" id="PTHR12049">
    <property type="entry name" value="PROTEIN ARGININE METHYLTRANSFERASE NDUFAF7, MITOCHONDRIAL"/>
    <property type="match status" value="1"/>
</dbReference>
<dbReference type="PANTHER" id="PTHR12049:SF7">
    <property type="entry name" value="PROTEIN ARGININE METHYLTRANSFERASE NDUFAF7, MITOCHONDRIAL"/>
    <property type="match status" value="1"/>
</dbReference>
<dbReference type="Pfam" id="PF02636">
    <property type="entry name" value="Methyltransf_28"/>
    <property type="match status" value="1"/>
</dbReference>
<dbReference type="SUPFAM" id="SSF53335">
    <property type="entry name" value="S-adenosyl-L-methionine-dependent methyltransferases"/>
    <property type="match status" value="1"/>
</dbReference>
<name>NDUF7_MOUSE</name>
<keyword id="KW-0025">Alternative splicing</keyword>
<keyword id="KW-0489">Methyltransferase</keyword>
<keyword id="KW-0496">Mitochondrion</keyword>
<keyword id="KW-1185">Reference proteome</keyword>
<keyword id="KW-0808">Transferase</keyword>
<keyword id="KW-0809">Transit peptide</keyword>